<proteinExistence type="inferred from homology"/>
<organism>
    <name type="scientific">Anaplasma marginale (strain St. Maries)</name>
    <dbReference type="NCBI Taxonomy" id="234826"/>
    <lineage>
        <taxon>Bacteria</taxon>
        <taxon>Pseudomonadati</taxon>
        <taxon>Pseudomonadota</taxon>
        <taxon>Alphaproteobacteria</taxon>
        <taxon>Rickettsiales</taxon>
        <taxon>Anaplasmataceae</taxon>
        <taxon>Anaplasma</taxon>
    </lineage>
</organism>
<feature type="chain" id="PRO_0000241064" description="Glutamyl-tRNA(Gln) amidotransferase subunit A">
    <location>
        <begin position="1"/>
        <end position="489"/>
    </location>
</feature>
<feature type="active site" description="Charge relay system" evidence="1">
    <location>
        <position position="79"/>
    </location>
</feature>
<feature type="active site" description="Charge relay system" evidence="1">
    <location>
        <position position="158"/>
    </location>
</feature>
<feature type="active site" description="Acyl-ester intermediate" evidence="1">
    <location>
        <position position="182"/>
    </location>
</feature>
<comment type="function">
    <text evidence="1">Allows the formation of correctly charged Gln-tRNA(Gln) through the transamidation of misacylated Glu-tRNA(Gln) in organisms which lack glutaminyl-tRNA synthetase. The reaction takes place in the presence of glutamine and ATP through an activated gamma-phospho-Glu-tRNA(Gln).</text>
</comment>
<comment type="catalytic activity">
    <reaction evidence="1">
        <text>L-glutamyl-tRNA(Gln) + L-glutamine + ATP + H2O = L-glutaminyl-tRNA(Gln) + L-glutamate + ADP + phosphate + H(+)</text>
        <dbReference type="Rhea" id="RHEA:17521"/>
        <dbReference type="Rhea" id="RHEA-COMP:9681"/>
        <dbReference type="Rhea" id="RHEA-COMP:9684"/>
        <dbReference type="ChEBI" id="CHEBI:15377"/>
        <dbReference type="ChEBI" id="CHEBI:15378"/>
        <dbReference type="ChEBI" id="CHEBI:29985"/>
        <dbReference type="ChEBI" id="CHEBI:30616"/>
        <dbReference type="ChEBI" id="CHEBI:43474"/>
        <dbReference type="ChEBI" id="CHEBI:58359"/>
        <dbReference type="ChEBI" id="CHEBI:78520"/>
        <dbReference type="ChEBI" id="CHEBI:78521"/>
        <dbReference type="ChEBI" id="CHEBI:456216"/>
        <dbReference type="EC" id="6.3.5.7"/>
    </reaction>
</comment>
<comment type="subunit">
    <text evidence="1">Heterotrimer of A, B and C subunits.</text>
</comment>
<comment type="similarity">
    <text evidence="1">Belongs to the amidase family. GatA subfamily.</text>
</comment>
<keyword id="KW-0067">ATP-binding</keyword>
<keyword id="KW-0436">Ligase</keyword>
<keyword id="KW-0547">Nucleotide-binding</keyword>
<keyword id="KW-0648">Protein biosynthesis</keyword>
<sequence length="489" mass="52821">MKRELLKLSILEAHRCLKNKDFSARELTEAYIGAVEQDTLNAFVTTTPELALAAADRTDGLLQRGEPIHPMSGIPVGVKDLFCTKGVRTTACSNILKNFVPTYESTVSQKLWDSGAVMLGKLNMDEFAMGSSNTYSCFGPVKNPWKGTEGKDLTPGGSSGGSSAAVAGLLCAGALGSDTGGSVRQPAALCGVVGAKPTYGRCSRWGMIAYASSLDQAGVLARTVEDAAVMLNAICGYDQKDSTSSQEAVPDFLGGISRDVRGVRIGIPKEYELPKNRGDIAAMWDQNIKHLLDCGAEIVEISLPHTTYALPVYYILASSEASSNLARYDGIRYGTRVEGETIDEMYELTRSLNFGEEVKRRMLIGAYTLSSGYRRAYYDKAQRVRCLVIRDFEEAFKKVDCILALTTPVEATGIEEPLSAMDRYFTDVFTVPASLAGLPAISVPAGLSERKLPMALQVIGNYHDECGMLNLAAVIYEHSGGVLQHLHGF</sequence>
<dbReference type="EC" id="6.3.5.7" evidence="1"/>
<dbReference type="EMBL" id="CP000030">
    <property type="protein sequence ID" value="AAV86668.1"/>
    <property type="molecule type" value="Genomic_DNA"/>
</dbReference>
<dbReference type="RefSeq" id="WP_010264692.1">
    <property type="nucleotide sequence ID" value="NZ_AFMU01000058.1"/>
</dbReference>
<dbReference type="SMR" id="Q5PAL2"/>
<dbReference type="GeneID" id="7398138"/>
<dbReference type="KEGG" id="ama:AM698"/>
<dbReference type="PATRIC" id="fig|320483.3.peg.604"/>
<dbReference type="HOGENOM" id="CLU_009600_0_3_5"/>
<dbReference type="GO" id="GO:0030956">
    <property type="term" value="C:glutamyl-tRNA(Gln) amidotransferase complex"/>
    <property type="evidence" value="ECO:0007669"/>
    <property type="project" value="InterPro"/>
</dbReference>
<dbReference type="GO" id="GO:0005524">
    <property type="term" value="F:ATP binding"/>
    <property type="evidence" value="ECO:0007669"/>
    <property type="project" value="UniProtKB-KW"/>
</dbReference>
<dbReference type="GO" id="GO:0050567">
    <property type="term" value="F:glutaminyl-tRNA synthase (glutamine-hydrolyzing) activity"/>
    <property type="evidence" value="ECO:0007669"/>
    <property type="project" value="UniProtKB-UniRule"/>
</dbReference>
<dbReference type="GO" id="GO:0006412">
    <property type="term" value="P:translation"/>
    <property type="evidence" value="ECO:0007669"/>
    <property type="project" value="UniProtKB-UniRule"/>
</dbReference>
<dbReference type="Gene3D" id="3.90.1300.10">
    <property type="entry name" value="Amidase signature (AS) domain"/>
    <property type="match status" value="1"/>
</dbReference>
<dbReference type="HAMAP" id="MF_00120">
    <property type="entry name" value="GatA"/>
    <property type="match status" value="1"/>
</dbReference>
<dbReference type="InterPro" id="IPR000120">
    <property type="entry name" value="Amidase"/>
</dbReference>
<dbReference type="InterPro" id="IPR020556">
    <property type="entry name" value="Amidase_CS"/>
</dbReference>
<dbReference type="InterPro" id="IPR023631">
    <property type="entry name" value="Amidase_dom"/>
</dbReference>
<dbReference type="InterPro" id="IPR036928">
    <property type="entry name" value="AS_sf"/>
</dbReference>
<dbReference type="InterPro" id="IPR004412">
    <property type="entry name" value="GatA"/>
</dbReference>
<dbReference type="NCBIfam" id="TIGR00132">
    <property type="entry name" value="gatA"/>
    <property type="match status" value="1"/>
</dbReference>
<dbReference type="PANTHER" id="PTHR11895:SF151">
    <property type="entry name" value="GLUTAMYL-TRNA(GLN) AMIDOTRANSFERASE SUBUNIT A"/>
    <property type="match status" value="1"/>
</dbReference>
<dbReference type="PANTHER" id="PTHR11895">
    <property type="entry name" value="TRANSAMIDASE"/>
    <property type="match status" value="1"/>
</dbReference>
<dbReference type="Pfam" id="PF01425">
    <property type="entry name" value="Amidase"/>
    <property type="match status" value="1"/>
</dbReference>
<dbReference type="SUPFAM" id="SSF75304">
    <property type="entry name" value="Amidase signature (AS) enzymes"/>
    <property type="match status" value="1"/>
</dbReference>
<dbReference type="PROSITE" id="PS00571">
    <property type="entry name" value="AMIDASES"/>
    <property type="match status" value="1"/>
</dbReference>
<reference key="1">
    <citation type="journal article" date="2005" name="Proc. Natl. Acad. Sci. U.S.A.">
        <title>Complete genome sequencing of Anaplasma marginale reveals that the surface is skewed to two superfamilies of outer membrane proteins.</title>
        <authorList>
            <person name="Brayton K.A."/>
            <person name="Kappmeyer L.S."/>
            <person name="Herndon D.R."/>
            <person name="Dark M.J."/>
            <person name="Tibbals D.L."/>
            <person name="Palmer G.H."/>
            <person name="McGuire T.C."/>
            <person name="Knowles D.P. Jr."/>
        </authorList>
    </citation>
    <scope>NUCLEOTIDE SEQUENCE [LARGE SCALE GENOMIC DNA]</scope>
    <source>
        <strain>St. Maries</strain>
    </source>
</reference>
<evidence type="ECO:0000255" key="1">
    <source>
        <dbReference type="HAMAP-Rule" id="MF_00120"/>
    </source>
</evidence>
<name>GATA_ANAMM</name>
<gene>
    <name evidence="1" type="primary">gatA</name>
    <name type="ordered locus">AM698</name>
</gene>
<protein>
    <recommendedName>
        <fullName evidence="1">Glutamyl-tRNA(Gln) amidotransferase subunit A</fullName>
        <shortName evidence="1">Glu-ADT subunit A</shortName>
        <ecNumber evidence="1">6.3.5.7</ecNumber>
    </recommendedName>
</protein>
<accession>Q5PAL2</accession>